<feature type="chain" id="PRO_1000073215" description="Large ribosomal subunit protein uL1">
    <location>
        <begin position="1"/>
        <end position="229"/>
    </location>
</feature>
<gene>
    <name evidence="1" type="primary">rplA</name>
    <name type="ordered locus">Asuc_0044</name>
</gene>
<keyword id="KW-1185">Reference proteome</keyword>
<keyword id="KW-0678">Repressor</keyword>
<keyword id="KW-0687">Ribonucleoprotein</keyword>
<keyword id="KW-0689">Ribosomal protein</keyword>
<keyword id="KW-0694">RNA-binding</keyword>
<keyword id="KW-0699">rRNA-binding</keyword>
<keyword id="KW-0810">Translation regulation</keyword>
<keyword id="KW-0820">tRNA-binding</keyword>
<protein>
    <recommendedName>
        <fullName evidence="1">Large ribosomal subunit protein uL1</fullName>
    </recommendedName>
    <alternativeName>
        <fullName evidence="2">50S ribosomal protein L1</fullName>
    </alternativeName>
</protein>
<evidence type="ECO:0000255" key="1">
    <source>
        <dbReference type="HAMAP-Rule" id="MF_01318"/>
    </source>
</evidence>
<evidence type="ECO:0000305" key="2"/>
<sequence>MAKLTKKMKAIKAGVDSTKAYEINEALALLKQFATAKFNESVDVAVNLGIDPRKSDQNVRGATVLPHGTGRTVRVAVFTQGANAEAAKEAGADLIGMEDLAEQVKKGEMDFDVVIASPDAMRVVGQLGQILGPRGLMPNPKVGTVTPNVAEAVKNAKSGQVRYRNDKNGIIHTTIGKASFSEEQLKENLQALLAALAKARPTTAKGIFIKKVSVSTTQGAGVQVDQSSL</sequence>
<proteinExistence type="inferred from homology"/>
<reference key="1">
    <citation type="journal article" date="2010" name="BMC Genomics">
        <title>A genomic perspective on the potential of Actinobacillus succinogenes for industrial succinate production.</title>
        <authorList>
            <person name="McKinlay J.B."/>
            <person name="Laivenieks M."/>
            <person name="Schindler B.D."/>
            <person name="McKinlay A.A."/>
            <person name="Siddaramappa S."/>
            <person name="Challacombe J.F."/>
            <person name="Lowry S.R."/>
            <person name="Clum A."/>
            <person name="Lapidus A.L."/>
            <person name="Burkhart K.B."/>
            <person name="Harkins V."/>
            <person name="Vieille C."/>
        </authorList>
    </citation>
    <scope>NUCLEOTIDE SEQUENCE [LARGE SCALE GENOMIC DNA]</scope>
    <source>
        <strain>ATCC 55618 / DSM 22257 / CCUG 43843 / 130Z</strain>
    </source>
</reference>
<organism>
    <name type="scientific">Actinobacillus succinogenes (strain ATCC 55618 / DSM 22257 / CCUG 43843 / 130Z)</name>
    <dbReference type="NCBI Taxonomy" id="339671"/>
    <lineage>
        <taxon>Bacteria</taxon>
        <taxon>Pseudomonadati</taxon>
        <taxon>Pseudomonadota</taxon>
        <taxon>Gammaproteobacteria</taxon>
        <taxon>Pasteurellales</taxon>
        <taxon>Pasteurellaceae</taxon>
        <taxon>Actinobacillus</taxon>
    </lineage>
</organism>
<comment type="function">
    <text evidence="1">Binds directly to 23S rRNA. The L1 stalk is quite mobile in the ribosome, and is involved in E site tRNA release.</text>
</comment>
<comment type="function">
    <text evidence="1">Protein L1 is also a translational repressor protein, it controls the translation of the L11 operon by binding to its mRNA.</text>
</comment>
<comment type="subunit">
    <text evidence="1">Part of the 50S ribosomal subunit.</text>
</comment>
<comment type="similarity">
    <text evidence="1">Belongs to the universal ribosomal protein uL1 family.</text>
</comment>
<accession>A6VKC8</accession>
<name>RL1_ACTSZ</name>
<dbReference type="EMBL" id="CP000746">
    <property type="protein sequence ID" value="ABR73425.1"/>
    <property type="molecule type" value="Genomic_DNA"/>
</dbReference>
<dbReference type="RefSeq" id="WP_011978701.1">
    <property type="nucleotide sequence ID" value="NC_009655.1"/>
</dbReference>
<dbReference type="SMR" id="A6VKC8"/>
<dbReference type="STRING" id="339671.Asuc_0044"/>
<dbReference type="KEGG" id="asu:Asuc_0044"/>
<dbReference type="eggNOG" id="COG0081">
    <property type="taxonomic scope" value="Bacteria"/>
</dbReference>
<dbReference type="HOGENOM" id="CLU_062853_0_0_6"/>
<dbReference type="OrthoDB" id="9803740at2"/>
<dbReference type="Proteomes" id="UP000001114">
    <property type="component" value="Chromosome"/>
</dbReference>
<dbReference type="GO" id="GO:0022625">
    <property type="term" value="C:cytosolic large ribosomal subunit"/>
    <property type="evidence" value="ECO:0007669"/>
    <property type="project" value="TreeGrafter"/>
</dbReference>
<dbReference type="GO" id="GO:0019843">
    <property type="term" value="F:rRNA binding"/>
    <property type="evidence" value="ECO:0007669"/>
    <property type="project" value="UniProtKB-UniRule"/>
</dbReference>
<dbReference type="GO" id="GO:0003735">
    <property type="term" value="F:structural constituent of ribosome"/>
    <property type="evidence" value="ECO:0007669"/>
    <property type="project" value="InterPro"/>
</dbReference>
<dbReference type="GO" id="GO:0000049">
    <property type="term" value="F:tRNA binding"/>
    <property type="evidence" value="ECO:0007669"/>
    <property type="project" value="UniProtKB-KW"/>
</dbReference>
<dbReference type="GO" id="GO:0006417">
    <property type="term" value="P:regulation of translation"/>
    <property type="evidence" value="ECO:0007669"/>
    <property type="project" value="UniProtKB-KW"/>
</dbReference>
<dbReference type="GO" id="GO:0006412">
    <property type="term" value="P:translation"/>
    <property type="evidence" value="ECO:0007669"/>
    <property type="project" value="UniProtKB-UniRule"/>
</dbReference>
<dbReference type="CDD" id="cd00403">
    <property type="entry name" value="Ribosomal_L1"/>
    <property type="match status" value="1"/>
</dbReference>
<dbReference type="FunFam" id="3.40.50.790:FF:000001">
    <property type="entry name" value="50S ribosomal protein L1"/>
    <property type="match status" value="1"/>
</dbReference>
<dbReference type="Gene3D" id="3.30.190.20">
    <property type="match status" value="1"/>
</dbReference>
<dbReference type="Gene3D" id="3.40.50.790">
    <property type="match status" value="1"/>
</dbReference>
<dbReference type="HAMAP" id="MF_01318_B">
    <property type="entry name" value="Ribosomal_uL1_B"/>
    <property type="match status" value="1"/>
</dbReference>
<dbReference type="InterPro" id="IPR005878">
    <property type="entry name" value="Ribosom_uL1_bac-type"/>
</dbReference>
<dbReference type="InterPro" id="IPR002143">
    <property type="entry name" value="Ribosomal_uL1"/>
</dbReference>
<dbReference type="InterPro" id="IPR023674">
    <property type="entry name" value="Ribosomal_uL1-like"/>
</dbReference>
<dbReference type="InterPro" id="IPR028364">
    <property type="entry name" value="Ribosomal_uL1/biogenesis"/>
</dbReference>
<dbReference type="InterPro" id="IPR016095">
    <property type="entry name" value="Ribosomal_uL1_3-a/b-sand"/>
</dbReference>
<dbReference type="InterPro" id="IPR023673">
    <property type="entry name" value="Ribosomal_uL1_CS"/>
</dbReference>
<dbReference type="NCBIfam" id="TIGR01169">
    <property type="entry name" value="rplA_bact"/>
    <property type="match status" value="1"/>
</dbReference>
<dbReference type="PANTHER" id="PTHR36427">
    <property type="entry name" value="54S RIBOSOMAL PROTEIN L1, MITOCHONDRIAL"/>
    <property type="match status" value="1"/>
</dbReference>
<dbReference type="PANTHER" id="PTHR36427:SF3">
    <property type="entry name" value="LARGE RIBOSOMAL SUBUNIT PROTEIN UL1M"/>
    <property type="match status" value="1"/>
</dbReference>
<dbReference type="Pfam" id="PF00687">
    <property type="entry name" value="Ribosomal_L1"/>
    <property type="match status" value="1"/>
</dbReference>
<dbReference type="PIRSF" id="PIRSF002155">
    <property type="entry name" value="Ribosomal_L1"/>
    <property type="match status" value="1"/>
</dbReference>
<dbReference type="SUPFAM" id="SSF56808">
    <property type="entry name" value="Ribosomal protein L1"/>
    <property type="match status" value="1"/>
</dbReference>
<dbReference type="PROSITE" id="PS01199">
    <property type="entry name" value="RIBOSOMAL_L1"/>
    <property type="match status" value="1"/>
</dbReference>